<organism>
    <name type="scientific">Shewanella putrefaciens (strain CN-32 / ATCC BAA-453)</name>
    <dbReference type="NCBI Taxonomy" id="319224"/>
    <lineage>
        <taxon>Bacteria</taxon>
        <taxon>Pseudomonadati</taxon>
        <taxon>Pseudomonadota</taxon>
        <taxon>Gammaproteobacteria</taxon>
        <taxon>Alteromonadales</taxon>
        <taxon>Shewanellaceae</taxon>
        <taxon>Shewanella</taxon>
    </lineage>
</organism>
<gene>
    <name type="ordered locus">Sputcn32_2702</name>
</gene>
<sequence>MKKQLLSALIGVSLLAPMAASAADYVIDTEGAHASITFKVNHLGYSYVVGRFNDFSGDFSYDAAKPTAMTVNVTVNTLSVDSNHAERDKHIRGEDFLNTGKFAKATFASTSVEDKGNGDLVINGNLTLNGVTKPLAIKAHAVGEGQDPWGGYRAGFTGTTTFAMKDFGIKMDLGPASSHVELDLVVEGVRK</sequence>
<evidence type="ECO:0000255" key="1">
    <source>
        <dbReference type="HAMAP-Rule" id="MF_00780"/>
    </source>
</evidence>
<dbReference type="EMBL" id="CP000681">
    <property type="protein sequence ID" value="ABP76421.1"/>
    <property type="molecule type" value="Genomic_DNA"/>
</dbReference>
<dbReference type="SMR" id="A4Y8Y8"/>
<dbReference type="STRING" id="319224.Sputcn32_2702"/>
<dbReference type="KEGG" id="spc:Sputcn32_2702"/>
<dbReference type="eggNOG" id="COG2353">
    <property type="taxonomic scope" value="Bacteria"/>
</dbReference>
<dbReference type="HOGENOM" id="CLU_071003_1_2_6"/>
<dbReference type="GO" id="GO:0042597">
    <property type="term" value="C:periplasmic space"/>
    <property type="evidence" value="ECO:0007669"/>
    <property type="project" value="UniProtKB-SubCell"/>
</dbReference>
<dbReference type="Gene3D" id="2.40.128.110">
    <property type="entry name" value="Lipid/polyisoprenoid-binding, YceI-like"/>
    <property type="match status" value="1"/>
</dbReference>
<dbReference type="HAMAP" id="MF_00780">
    <property type="entry name" value="UPF0312"/>
    <property type="match status" value="1"/>
</dbReference>
<dbReference type="InterPro" id="IPR007372">
    <property type="entry name" value="Lipid/polyisoprenoid-bd_YceI"/>
</dbReference>
<dbReference type="InterPro" id="IPR036761">
    <property type="entry name" value="TTHA0802/YceI-like_sf"/>
</dbReference>
<dbReference type="InterPro" id="IPR023480">
    <property type="entry name" value="UPF0312/YceI"/>
</dbReference>
<dbReference type="NCBIfam" id="NF002994">
    <property type="entry name" value="PRK03757.1"/>
    <property type="match status" value="1"/>
</dbReference>
<dbReference type="PANTHER" id="PTHR34406">
    <property type="entry name" value="PROTEIN YCEI"/>
    <property type="match status" value="1"/>
</dbReference>
<dbReference type="PANTHER" id="PTHR34406:SF1">
    <property type="entry name" value="PROTEIN YCEI"/>
    <property type="match status" value="1"/>
</dbReference>
<dbReference type="Pfam" id="PF04264">
    <property type="entry name" value="YceI"/>
    <property type="match status" value="1"/>
</dbReference>
<dbReference type="SMART" id="SM00867">
    <property type="entry name" value="YceI"/>
    <property type="match status" value="1"/>
</dbReference>
<dbReference type="SUPFAM" id="SSF101874">
    <property type="entry name" value="YceI-like"/>
    <property type="match status" value="1"/>
</dbReference>
<accession>A4Y8Y8</accession>
<keyword id="KW-0574">Periplasm</keyword>
<keyword id="KW-0732">Signal</keyword>
<name>Y2702_SHEPC</name>
<protein>
    <recommendedName>
        <fullName evidence="1">UPF0312 protein Sputcn32_2702</fullName>
    </recommendedName>
</protein>
<comment type="subcellular location">
    <subcellularLocation>
        <location evidence="1">Periplasm</location>
    </subcellularLocation>
</comment>
<comment type="similarity">
    <text evidence="1">Belongs to the UPF0312 family. Type 1 subfamily.</text>
</comment>
<reference key="1">
    <citation type="submission" date="2007-04" db="EMBL/GenBank/DDBJ databases">
        <title>Complete sequence of Shewanella putrefaciens CN-32.</title>
        <authorList>
            <consortium name="US DOE Joint Genome Institute"/>
            <person name="Copeland A."/>
            <person name="Lucas S."/>
            <person name="Lapidus A."/>
            <person name="Barry K."/>
            <person name="Detter J.C."/>
            <person name="Glavina del Rio T."/>
            <person name="Hammon N."/>
            <person name="Israni S."/>
            <person name="Dalin E."/>
            <person name="Tice H."/>
            <person name="Pitluck S."/>
            <person name="Chain P."/>
            <person name="Malfatti S."/>
            <person name="Shin M."/>
            <person name="Vergez L."/>
            <person name="Schmutz J."/>
            <person name="Larimer F."/>
            <person name="Land M."/>
            <person name="Hauser L."/>
            <person name="Kyrpides N."/>
            <person name="Mikhailova N."/>
            <person name="Romine M.F."/>
            <person name="Fredrickson J."/>
            <person name="Tiedje J."/>
            <person name="Richardson P."/>
        </authorList>
    </citation>
    <scope>NUCLEOTIDE SEQUENCE [LARGE SCALE GENOMIC DNA]</scope>
    <source>
        <strain>CN-32 / ATCC BAA-453</strain>
    </source>
</reference>
<feature type="signal peptide" evidence="1">
    <location>
        <begin position="1"/>
        <end position="22"/>
    </location>
</feature>
<feature type="chain" id="PRO_5000241668" description="UPF0312 protein Sputcn32_2702">
    <location>
        <begin position="23"/>
        <end position="191"/>
    </location>
</feature>
<proteinExistence type="inferred from homology"/>